<protein>
    <recommendedName>
        <fullName evidence="1">Phosphoribosyl-ATP pyrophosphatase</fullName>
        <shortName evidence="1">PRA-PH</shortName>
        <ecNumber evidence="1">3.6.1.31</ecNumber>
    </recommendedName>
</protein>
<gene>
    <name evidence="1" type="primary">hisE</name>
    <name type="ordered locus">BamMC406_0360</name>
</gene>
<proteinExistence type="inferred from homology"/>
<accession>B1YRW3</accession>
<sequence length="121" mass="13274">MTQSTEDTLLRLAAVIDSRKGGDPDQSYVSRLFHKGDDAVLKKIGEEATEVVLAAKDVRQGGAPTALVGEVADLWFHCLVMLSHFDLSPADVIGELERREGLSGIEEKALRKRREREENGG</sequence>
<keyword id="KW-0028">Amino-acid biosynthesis</keyword>
<keyword id="KW-0067">ATP-binding</keyword>
<keyword id="KW-0963">Cytoplasm</keyword>
<keyword id="KW-0368">Histidine biosynthesis</keyword>
<keyword id="KW-0378">Hydrolase</keyword>
<keyword id="KW-0547">Nucleotide-binding</keyword>
<organism>
    <name type="scientific">Burkholderia ambifaria (strain MC40-6)</name>
    <dbReference type="NCBI Taxonomy" id="398577"/>
    <lineage>
        <taxon>Bacteria</taxon>
        <taxon>Pseudomonadati</taxon>
        <taxon>Pseudomonadota</taxon>
        <taxon>Betaproteobacteria</taxon>
        <taxon>Burkholderiales</taxon>
        <taxon>Burkholderiaceae</taxon>
        <taxon>Burkholderia</taxon>
        <taxon>Burkholderia cepacia complex</taxon>
    </lineage>
</organism>
<feature type="chain" id="PRO_1000135304" description="Phosphoribosyl-ATP pyrophosphatase">
    <location>
        <begin position="1"/>
        <end position="121"/>
    </location>
</feature>
<comment type="catalytic activity">
    <reaction evidence="1">
        <text>1-(5-phospho-beta-D-ribosyl)-ATP + H2O = 1-(5-phospho-beta-D-ribosyl)-5'-AMP + diphosphate + H(+)</text>
        <dbReference type="Rhea" id="RHEA:22828"/>
        <dbReference type="ChEBI" id="CHEBI:15377"/>
        <dbReference type="ChEBI" id="CHEBI:15378"/>
        <dbReference type="ChEBI" id="CHEBI:33019"/>
        <dbReference type="ChEBI" id="CHEBI:59457"/>
        <dbReference type="ChEBI" id="CHEBI:73183"/>
        <dbReference type="EC" id="3.6.1.31"/>
    </reaction>
</comment>
<comment type="pathway">
    <text evidence="1">Amino-acid biosynthesis; L-histidine biosynthesis; L-histidine from 5-phospho-alpha-D-ribose 1-diphosphate: step 2/9.</text>
</comment>
<comment type="subcellular location">
    <subcellularLocation>
        <location evidence="1">Cytoplasm</location>
    </subcellularLocation>
</comment>
<comment type="similarity">
    <text evidence="1">Belongs to the PRA-PH family.</text>
</comment>
<dbReference type="EC" id="3.6.1.31" evidence="1"/>
<dbReference type="EMBL" id="CP001025">
    <property type="protein sequence ID" value="ACB62861.1"/>
    <property type="molecule type" value="Genomic_DNA"/>
</dbReference>
<dbReference type="RefSeq" id="WP_006751798.1">
    <property type="nucleotide sequence ID" value="NC_010551.1"/>
</dbReference>
<dbReference type="SMR" id="B1YRW3"/>
<dbReference type="KEGG" id="bac:BamMC406_0360"/>
<dbReference type="HOGENOM" id="CLU_123337_1_2_4"/>
<dbReference type="OrthoDB" id="9814738at2"/>
<dbReference type="UniPathway" id="UPA00031">
    <property type="reaction ID" value="UER00007"/>
</dbReference>
<dbReference type="Proteomes" id="UP000001680">
    <property type="component" value="Chromosome 1"/>
</dbReference>
<dbReference type="GO" id="GO:0005737">
    <property type="term" value="C:cytoplasm"/>
    <property type="evidence" value="ECO:0007669"/>
    <property type="project" value="UniProtKB-SubCell"/>
</dbReference>
<dbReference type="GO" id="GO:0005524">
    <property type="term" value="F:ATP binding"/>
    <property type="evidence" value="ECO:0007669"/>
    <property type="project" value="UniProtKB-KW"/>
</dbReference>
<dbReference type="GO" id="GO:0004636">
    <property type="term" value="F:phosphoribosyl-ATP diphosphatase activity"/>
    <property type="evidence" value="ECO:0007669"/>
    <property type="project" value="UniProtKB-UniRule"/>
</dbReference>
<dbReference type="GO" id="GO:0000105">
    <property type="term" value="P:L-histidine biosynthetic process"/>
    <property type="evidence" value="ECO:0007669"/>
    <property type="project" value="UniProtKB-UniRule"/>
</dbReference>
<dbReference type="CDD" id="cd11534">
    <property type="entry name" value="NTP-PPase_HisIE_like"/>
    <property type="match status" value="1"/>
</dbReference>
<dbReference type="Gene3D" id="1.10.287.1080">
    <property type="entry name" value="MazG-like"/>
    <property type="match status" value="1"/>
</dbReference>
<dbReference type="HAMAP" id="MF_01020">
    <property type="entry name" value="HisE"/>
    <property type="match status" value="1"/>
</dbReference>
<dbReference type="InterPro" id="IPR008179">
    <property type="entry name" value="HisE"/>
</dbReference>
<dbReference type="InterPro" id="IPR021130">
    <property type="entry name" value="PRib-ATP_PPHydrolase-like"/>
</dbReference>
<dbReference type="NCBIfam" id="TIGR03188">
    <property type="entry name" value="histidine_hisI"/>
    <property type="match status" value="1"/>
</dbReference>
<dbReference type="NCBIfam" id="NF001611">
    <property type="entry name" value="PRK00400.1-3"/>
    <property type="match status" value="1"/>
</dbReference>
<dbReference type="PANTHER" id="PTHR42945">
    <property type="entry name" value="HISTIDINE BIOSYNTHESIS BIFUNCTIONAL PROTEIN"/>
    <property type="match status" value="1"/>
</dbReference>
<dbReference type="PANTHER" id="PTHR42945:SF9">
    <property type="entry name" value="HISTIDINE BIOSYNTHESIS BIFUNCTIONAL PROTEIN HISIE"/>
    <property type="match status" value="1"/>
</dbReference>
<dbReference type="Pfam" id="PF01503">
    <property type="entry name" value="PRA-PH"/>
    <property type="match status" value="1"/>
</dbReference>
<dbReference type="SUPFAM" id="SSF101386">
    <property type="entry name" value="all-alpha NTP pyrophosphatases"/>
    <property type="match status" value="1"/>
</dbReference>
<name>HIS2_BURA4</name>
<reference key="1">
    <citation type="submission" date="2008-04" db="EMBL/GenBank/DDBJ databases">
        <title>Complete sequence of chromosome 1 of Burkholderia ambifaria MC40-6.</title>
        <authorList>
            <person name="Copeland A."/>
            <person name="Lucas S."/>
            <person name="Lapidus A."/>
            <person name="Glavina del Rio T."/>
            <person name="Dalin E."/>
            <person name="Tice H."/>
            <person name="Pitluck S."/>
            <person name="Chain P."/>
            <person name="Malfatti S."/>
            <person name="Shin M."/>
            <person name="Vergez L."/>
            <person name="Lang D."/>
            <person name="Schmutz J."/>
            <person name="Larimer F."/>
            <person name="Land M."/>
            <person name="Hauser L."/>
            <person name="Kyrpides N."/>
            <person name="Lykidis A."/>
            <person name="Ramette A."/>
            <person name="Konstantinidis K."/>
            <person name="Tiedje J."/>
            <person name="Richardson P."/>
        </authorList>
    </citation>
    <scope>NUCLEOTIDE SEQUENCE [LARGE SCALE GENOMIC DNA]</scope>
    <source>
        <strain>MC40-6</strain>
    </source>
</reference>
<evidence type="ECO:0000255" key="1">
    <source>
        <dbReference type="HAMAP-Rule" id="MF_01020"/>
    </source>
</evidence>